<reference key="1">
    <citation type="submission" date="2003-01" db="EMBL/GenBank/DDBJ databases">
        <authorList>
            <person name="Xiong S.S."/>
            <person name="Hickey G.E."/>
            <person name="Humphrey J.E."/>
        </authorList>
    </citation>
    <scope>NUCLEOTIDE SEQUENCE [MRNA]</scope>
</reference>
<reference key="2">
    <citation type="journal article" date="2005" name="Cytokine">
        <title>Cloning and characterization of mouse homolog of the CXC chemokine receptor CXCR1.</title>
        <authorList>
            <person name="Fu W."/>
            <person name="Zhang Y."/>
            <person name="Zhang J."/>
            <person name="Chen W.F."/>
        </authorList>
    </citation>
    <scope>NUCLEOTIDE SEQUENCE [MRNA]</scope>
    <source>
        <strain>BALB/cJ</strain>
    </source>
</reference>
<reference key="3">
    <citation type="journal article" date="2006" name="Mol. Immunol.">
        <title>A homolog of the human chemokine receptor CXCR1 is expressed in the mouse.</title>
        <authorList>
            <person name="Moepps B."/>
            <person name="Nuesseler E."/>
            <person name="Braun M."/>
            <person name="Gierschik P."/>
        </authorList>
    </citation>
    <scope>NUCLEOTIDE SEQUENCE [MRNA]</scope>
    <source>
        <strain>C57BL/6J</strain>
    </source>
</reference>
<reference key="4">
    <citation type="submission" date="2009-01" db="UniProtKB">
        <authorList>
            <person name="Lubec G."/>
            <person name="Sunyer B."/>
            <person name="Chen W.-Q."/>
        </authorList>
    </citation>
    <scope>PROTEIN SEQUENCE OF 340-351</scope>
    <scope>IDENTIFICATION BY MASS SPECTROMETRY</scope>
    <source>
        <strain>OF1</strain>
        <tissue>Hippocampus</tissue>
    </source>
</reference>
<gene>
    <name type="primary">Cxcr1</name>
    <name type="synonym">Il8ra</name>
</gene>
<feature type="chain" id="PRO_0000277473" description="C-X-C chemokine receptor type 1">
    <location>
        <begin position="1"/>
        <end position="351"/>
    </location>
</feature>
<feature type="topological domain" description="Extracellular" evidence="2">
    <location>
        <begin position="1"/>
        <end position="44"/>
    </location>
</feature>
<feature type="transmembrane region" description="Helical; Name=1" evidence="2">
    <location>
        <begin position="45"/>
        <end position="71"/>
    </location>
</feature>
<feature type="topological domain" description="Cytoplasmic" evidence="2">
    <location>
        <begin position="72"/>
        <end position="80"/>
    </location>
</feature>
<feature type="transmembrane region" description="Helical; Name=2" evidence="2">
    <location>
        <begin position="81"/>
        <end position="101"/>
    </location>
</feature>
<feature type="topological domain" description="Extracellular" evidence="2">
    <location>
        <begin position="102"/>
        <end position="116"/>
    </location>
</feature>
<feature type="transmembrane region" description="Helical; Name=3" evidence="2">
    <location>
        <begin position="117"/>
        <end position="138"/>
    </location>
</feature>
<feature type="topological domain" description="Cytoplasmic" evidence="2">
    <location>
        <begin position="139"/>
        <end position="159"/>
    </location>
</feature>
<feature type="transmembrane region" description="Helical; Name=4" evidence="2">
    <location>
        <begin position="160"/>
        <end position="179"/>
    </location>
</feature>
<feature type="topological domain" description="Extracellular" evidence="2">
    <location>
        <begin position="180"/>
        <end position="204"/>
    </location>
</feature>
<feature type="transmembrane region" description="Helical; Name=5" evidence="2">
    <location>
        <begin position="205"/>
        <end position="225"/>
    </location>
</feature>
<feature type="topological domain" description="Cytoplasmic" evidence="2">
    <location>
        <begin position="226"/>
        <end position="247"/>
    </location>
</feature>
<feature type="transmembrane region" description="Helical; Name=6" evidence="2">
    <location>
        <begin position="248"/>
        <end position="269"/>
    </location>
</feature>
<feature type="topological domain" description="Extracellular" evidence="2">
    <location>
        <begin position="270"/>
        <end position="290"/>
    </location>
</feature>
<feature type="transmembrane region" description="Helical; Name=7" evidence="2">
    <location>
        <begin position="291"/>
        <end position="313"/>
    </location>
</feature>
<feature type="topological domain" description="Cytoplasmic" evidence="2">
    <location>
        <begin position="314"/>
        <end position="351"/>
    </location>
</feature>
<feature type="glycosylation site" description="N-linked (GlcNAc...) asparagine" evidence="2">
    <location>
        <position position="22"/>
    </location>
</feature>
<feature type="disulfide bond" evidence="3">
    <location>
        <begin position="115"/>
        <end position="192"/>
    </location>
</feature>
<accession>Q810W6</accession>
<name>CXCR1_MOUSE</name>
<organism>
    <name type="scientific">Mus musculus</name>
    <name type="common">Mouse</name>
    <dbReference type="NCBI Taxonomy" id="10090"/>
    <lineage>
        <taxon>Eukaryota</taxon>
        <taxon>Metazoa</taxon>
        <taxon>Chordata</taxon>
        <taxon>Craniata</taxon>
        <taxon>Vertebrata</taxon>
        <taxon>Euteleostomi</taxon>
        <taxon>Mammalia</taxon>
        <taxon>Eutheria</taxon>
        <taxon>Euarchontoglires</taxon>
        <taxon>Glires</taxon>
        <taxon>Rodentia</taxon>
        <taxon>Myomorpha</taxon>
        <taxon>Muroidea</taxon>
        <taxon>Muridae</taxon>
        <taxon>Murinae</taxon>
        <taxon>Mus</taxon>
        <taxon>Mus</taxon>
    </lineage>
</organism>
<proteinExistence type="evidence at protein level"/>
<comment type="function">
    <text evidence="1">Receptor to interleukin-8, which is a powerful neutrophils chemotactic factor. Binding of IL-8 to the receptor causes activation of neutrophils. This response is mediated via a G-protein that activates a phosphatidylinositol-calcium second messenger system.</text>
</comment>
<comment type="subunit">
    <text evidence="1">Interacts with IL8. Interacts with GNAI2.</text>
</comment>
<comment type="subcellular location">
    <subcellularLocation>
        <location>Cell membrane</location>
        <topology>Multi-pass membrane protein</topology>
    </subcellularLocation>
</comment>
<comment type="similarity">
    <text evidence="3">Belongs to the G-protein coupled receptor 1 family.</text>
</comment>
<dbReference type="EMBL" id="AY227797">
    <property type="protein sequence ID" value="AAO72727.1"/>
    <property type="molecule type" value="mRNA"/>
</dbReference>
<dbReference type="EMBL" id="AY749637">
    <property type="protein sequence ID" value="AAU87365.1"/>
    <property type="molecule type" value="mRNA"/>
</dbReference>
<dbReference type="EMBL" id="AY390263">
    <property type="protein sequence ID" value="AAQ84305.1"/>
    <property type="molecule type" value="mRNA"/>
</dbReference>
<dbReference type="CCDS" id="CCDS15041.1"/>
<dbReference type="RefSeq" id="NP_839972.1">
    <property type="nucleotide sequence ID" value="NM_178241.5"/>
</dbReference>
<dbReference type="RefSeq" id="XP_011236803.1">
    <property type="nucleotide sequence ID" value="XM_011238501.2"/>
</dbReference>
<dbReference type="RefSeq" id="XP_011236805.1">
    <property type="nucleotide sequence ID" value="XM_011238503.2"/>
</dbReference>
<dbReference type="RefSeq" id="XP_030109560.1">
    <property type="nucleotide sequence ID" value="XM_030253700.2"/>
</dbReference>
<dbReference type="SMR" id="Q810W6"/>
<dbReference type="FunCoup" id="Q810W6">
    <property type="interactions" value="670"/>
</dbReference>
<dbReference type="STRING" id="10090.ENSMUSP00000139555"/>
<dbReference type="GlyCosmos" id="Q810W6">
    <property type="glycosylation" value="1 site, No reported glycans"/>
</dbReference>
<dbReference type="GlyGen" id="Q810W6">
    <property type="glycosylation" value="1 site"/>
</dbReference>
<dbReference type="PhosphoSitePlus" id="Q810W6"/>
<dbReference type="PaxDb" id="10090-ENSMUSP00000139555"/>
<dbReference type="Antibodypedia" id="4267">
    <property type="antibodies" value="652 antibodies from 45 providers"/>
</dbReference>
<dbReference type="DNASU" id="227288"/>
<dbReference type="Ensembl" id="ENSMUST00000053389.5">
    <property type="protein sequence ID" value="ENSMUSP00000049714.5"/>
    <property type="gene ID" value="ENSMUSG00000048480.6"/>
</dbReference>
<dbReference type="Ensembl" id="ENSMUST00000190313.2">
    <property type="protein sequence ID" value="ENSMUSP00000139555.2"/>
    <property type="gene ID" value="ENSMUSG00000048480.6"/>
</dbReference>
<dbReference type="GeneID" id="227288"/>
<dbReference type="KEGG" id="mmu:227288"/>
<dbReference type="UCSC" id="uc007blm.1">
    <property type="organism name" value="mouse"/>
</dbReference>
<dbReference type="AGR" id="MGI:2448715"/>
<dbReference type="CTD" id="3577"/>
<dbReference type="MGI" id="MGI:2448715">
    <property type="gene designation" value="Cxcr1"/>
</dbReference>
<dbReference type="VEuPathDB" id="HostDB:ENSMUSG00000048480"/>
<dbReference type="eggNOG" id="KOG3656">
    <property type="taxonomic scope" value="Eukaryota"/>
</dbReference>
<dbReference type="GeneTree" id="ENSGT01050000244848"/>
<dbReference type="HOGENOM" id="CLU_009579_8_3_1"/>
<dbReference type="InParanoid" id="Q810W6"/>
<dbReference type="OMA" id="DTCPRRE"/>
<dbReference type="OrthoDB" id="9946013at2759"/>
<dbReference type="PhylomeDB" id="Q810W6"/>
<dbReference type="TreeFam" id="TF330966"/>
<dbReference type="Reactome" id="R-MMU-380108">
    <property type="pathway name" value="Chemokine receptors bind chemokines"/>
</dbReference>
<dbReference type="Reactome" id="R-MMU-418594">
    <property type="pathway name" value="G alpha (i) signalling events"/>
</dbReference>
<dbReference type="Reactome" id="R-MMU-6798695">
    <property type="pathway name" value="Neutrophil degranulation"/>
</dbReference>
<dbReference type="BioGRID-ORCS" id="227288">
    <property type="hits" value="1 hit in 77 CRISPR screens"/>
</dbReference>
<dbReference type="ChiTaRS" id="Cxcr2">
    <property type="organism name" value="mouse"/>
</dbReference>
<dbReference type="PRO" id="PR:Q810W6"/>
<dbReference type="Proteomes" id="UP000000589">
    <property type="component" value="Chromosome 1"/>
</dbReference>
<dbReference type="RNAct" id="Q810W6">
    <property type="molecule type" value="protein"/>
</dbReference>
<dbReference type="Bgee" id="ENSMUSG00000048480">
    <property type="expression patterns" value="Expressed in granulocyte and 5 other cell types or tissues"/>
</dbReference>
<dbReference type="GO" id="GO:0005886">
    <property type="term" value="C:plasma membrane"/>
    <property type="evidence" value="ECO:0007669"/>
    <property type="project" value="UniProtKB-SubCell"/>
</dbReference>
<dbReference type="GO" id="GO:0016494">
    <property type="term" value="F:C-X-C chemokine receptor activity"/>
    <property type="evidence" value="ECO:0007669"/>
    <property type="project" value="InterPro"/>
</dbReference>
<dbReference type="GO" id="GO:0006935">
    <property type="term" value="P:chemotaxis"/>
    <property type="evidence" value="ECO:0007669"/>
    <property type="project" value="UniProtKB-KW"/>
</dbReference>
<dbReference type="CDD" id="cd15178">
    <property type="entry name" value="7tmA_CXCR1_2"/>
    <property type="match status" value="1"/>
</dbReference>
<dbReference type="FunFam" id="1.20.1070.10:FF:000157">
    <property type="entry name" value="C-X-C chemokine receptor type 2"/>
    <property type="match status" value="1"/>
</dbReference>
<dbReference type="Gene3D" id="1.20.1070.10">
    <property type="entry name" value="Rhodopsin 7-helix transmembrane proteins"/>
    <property type="match status" value="1"/>
</dbReference>
<dbReference type="InterPro" id="IPR050119">
    <property type="entry name" value="CCR1-9-like"/>
</dbReference>
<dbReference type="InterPro" id="IPR000174">
    <property type="entry name" value="Chemokine_CXCR_1/2"/>
</dbReference>
<dbReference type="InterPro" id="IPR000276">
    <property type="entry name" value="GPCR_Rhodpsn"/>
</dbReference>
<dbReference type="InterPro" id="IPR017452">
    <property type="entry name" value="GPCR_Rhodpsn_7TM"/>
</dbReference>
<dbReference type="PANTHER" id="PTHR10489:SF916">
    <property type="entry name" value="C-X-C CHEMOKINE RECEPTOR TYPE 1"/>
    <property type="match status" value="1"/>
</dbReference>
<dbReference type="PANTHER" id="PTHR10489">
    <property type="entry name" value="CELL ADHESION MOLECULE"/>
    <property type="match status" value="1"/>
</dbReference>
<dbReference type="Pfam" id="PF00001">
    <property type="entry name" value="7tm_1"/>
    <property type="match status" value="1"/>
</dbReference>
<dbReference type="PRINTS" id="PR00237">
    <property type="entry name" value="GPCRRHODOPSN"/>
</dbReference>
<dbReference type="PRINTS" id="PR00427">
    <property type="entry name" value="INTRLEUKIN8R"/>
</dbReference>
<dbReference type="SUPFAM" id="SSF81321">
    <property type="entry name" value="Family A G protein-coupled receptor-like"/>
    <property type="match status" value="1"/>
</dbReference>
<dbReference type="PROSITE" id="PS00237">
    <property type="entry name" value="G_PROTEIN_RECEP_F1_1"/>
    <property type="match status" value="1"/>
</dbReference>
<dbReference type="PROSITE" id="PS50262">
    <property type="entry name" value="G_PROTEIN_RECEP_F1_2"/>
    <property type="match status" value="1"/>
</dbReference>
<sequence length="351" mass="40032">MAEAEYFIWTNPEGDFEKEFGNITGMLPTGDYFIPCKRVPITNRQALVVFYALVSLLSLLGNSLVMLVILYRRRTRSVMDVYVLNLAIADLLFSLTLPFLAVSKLKGWIFGTPLCKMVSLLKEFNFFSGILLLACISVDRYLAIVHATRTLARKRYLVKFVCVGIWGLSLILSLPFAIFRQAYKPFRSGTVCYEVLGEATTDFRMTLRGLSHIFGFLLPLLTMLVCYGLTLRMLFKTHMRQKHRAMGVIFAVVLVFLLCCLPYNLVLLSDTLLGAHLIEDTCERRNDIDQALYITEILGFSHSCLNPIIYAFVGQNFRHEFLKILANHGLVRKEVLTHRRVAFHTSLTAIY</sequence>
<evidence type="ECO:0000250" key="1">
    <source>
        <dbReference type="UniProtKB" id="P25024"/>
    </source>
</evidence>
<evidence type="ECO:0000255" key="2"/>
<evidence type="ECO:0000255" key="3">
    <source>
        <dbReference type="PROSITE-ProRule" id="PRU00521"/>
    </source>
</evidence>
<keyword id="KW-1003">Cell membrane</keyword>
<keyword id="KW-0145">Chemotaxis</keyword>
<keyword id="KW-0903">Direct protein sequencing</keyword>
<keyword id="KW-1015">Disulfide bond</keyword>
<keyword id="KW-0297">G-protein coupled receptor</keyword>
<keyword id="KW-0325">Glycoprotein</keyword>
<keyword id="KW-0472">Membrane</keyword>
<keyword id="KW-0675">Receptor</keyword>
<keyword id="KW-1185">Reference proteome</keyword>
<keyword id="KW-0807">Transducer</keyword>
<keyword id="KW-0812">Transmembrane</keyword>
<keyword id="KW-1133">Transmembrane helix</keyword>
<protein>
    <recommendedName>
        <fullName>C-X-C chemokine receptor type 1</fullName>
        <shortName>CXC-R1</shortName>
        <shortName>CXCR-1</shortName>
    </recommendedName>
    <alternativeName>
        <fullName>High affinity interleukin-8 receptor A</fullName>
        <shortName>IL-8R A</shortName>
    </alternativeName>
    <cdAntigenName>CD181</cdAntigenName>
</protein>